<comment type="function">
    <text evidence="2">Transcription factor that binds to the octamer motif (5'-ATTTGCAT-3') and activates the promoters of the genes for some small nuclear RNAs (snRNA) and of genes such as those for histone H2B and immunoglobulins. Modulates transcription transactivation by NR3C1, AR and PGR.</text>
</comment>
<comment type="subunit">
    <text evidence="2">Interacts with POU2AF1; the interaction increases POU2F1 transactivation activity. Interacts with NR3C1, AR, PGR and HCFC1.</text>
</comment>
<comment type="subcellular location">
    <subcellularLocation>
        <location>Nucleus</location>
    </subcellularLocation>
</comment>
<comment type="alternative products">
    <event type="alternative splicing"/>
    <isoform>
        <id>P25425-1</id>
        <name>1</name>
        <name>OCT-1A</name>
        <sequence type="displayed"/>
    </isoform>
    <isoform>
        <id>P25425-2</id>
        <name>2</name>
        <name>OCT-1B</name>
        <sequence type="described" ref="VSP_002321"/>
    </isoform>
    <isoform>
        <id>P25425-3</id>
        <name>3</name>
        <name>OCT-1C</name>
        <sequence type="described" ref="VSP_002321 VSP_002322 VSP_002323"/>
    </isoform>
    <isoform>
        <id>P25425-4</id>
        <name>4</name>
        <name>OCT-1R</name>
        <sequence type="described" ref="VSP_007271 VSP_007272 VSP_002321 VSP_007273"/>
    </isoform>
    <isoform>
        <id>P25425-5</id>
        <name>5</name>
        <name>OCT-1L</name>
        <sequence type="described" ref="VSP_007271 VSP_002321"/>
    </isoform>
    <isoform>
        <id>P25425-6</id>
        <name>6</name>
        <sequence type="described" ref="VSP_007278"/>
    </isoform>
    <isoform>
        <id>P25425-7</id>
        <name>7</name>
        <sequence type="described" ref="VSP_007276 VSP_007277"/>
    </isoform>
    <isoform>
        <id>P25425-8</id>
        <name>8</name>
        <sequence type="described" ref="VSP_007278 VSP_002322 VSP_002323"/>
    </isoform>
    <isoform>
        <id>P25425-9</id>
        <name>9</name>
        <sequence type="described" ref="VSP_007274 VSP_007275"/>
    </isoform>
    <isoform>
        <id>P25425-10</id>
        <name>10</name>
        <name>OCT-1Z</name>
        <sequence type="described" ref="VSP_013404 VSP_013405"/>
    </isoform>
    <isoform>
        <id>P25425-11</id>
        <name>11</name>
        <sequence type="described" ref="VSP_007271 VSP_007273"/>
    </isoform>
    <isoform>
        <id>P25425-12</id>
        <name>12</name>
        <sequence type="described" ref="VSP_013403"/>
    </isoform>
</comment>
<comment type="tissue specificity">
    <text evidence="6 7 8 9">Ubiquitously expressed. However, isoforms 4 and 5 are only expressed in lymphocytes.</text>
</comment>
<comment type="PTM">
    <text evidence="1">Phosphorylated by PRKDC.</text>
</comment>
<comment type="similarity">
    <text evidence="19">Belongs to the POU transcription factor family. Class-2 subfamily.</text>
</comment>
<name>PO2F1_MOUSE</name>
<sequence length="770" mass="79547">MNNPSETNKSSMESEDASTGTQTNGLDFQKQPVPVGGAISTAQAQAFLGHLHQVQLAGTSLQAAAQSLNVQSKSSEESGDSQQSSQPSSQPPSVQSAIPQTQLMLAGGQITGLTLTPAQQQLLLQQAQAQAQLLAAAVQQHSASQQHSAAGATISASAATPMTQIPLSQPIQIAQDLQQLQQLQQQNLNLQQFVLVHPTTNLQPAQFIISQTPQGQQGLLQAQNLLTQLPQQSQANLLQPQPSITLTSQPTTPTRTIAAASVQTLPQSQSTPKRIDTPSLEEPSDLEELEQFAKTFKQRRIKLGFTQGDVGLAMGKLYGNDFSQTTISRFEALNLSFKNMCKLKPLLEKWLNDAENLSSDSTASSPSALNSPGLGAEGLNRRRKKRTSIETNIRVALEKSFMENQKPTSEDITLIAEQLNMEKEVIRVWFCNRRQKEKRINPPSSGGTSSSPIKAIFPSPASLVATTPSLVTSSTATTLTVNPVLPLTSAAVTNLSLTDQDLRRGCSWEVLRSLPDRVTTTAGTTDSTSNNNTATVISTAPPASSAVTSPSLSPSPSASASTSEASSASETNTTQTTSTPLPSPLGASQVMVTTPGLQTAAAALQGAAQLPANASLAAMAAAAGLSPGLMAPSQFAAGGALLSLSPGTLGSALSPALMSNSTLATIQALASSGSLPITSLDATGNLVFANAGGAPNIVTAPLFLNPQNLSLLTSNPVSLVSAAAASTGNSAPTASLHASSTSTESIQSSLFTVASASGPASTTTAASKAQ</sequence>
<accession>P25425</accession>
<accession>Q61994</accession>
<accession>Q63891</accession>
<accession>Q6Y681</accession>
<accession>Q7TSD0</accession>
<accession>Q8BT04</accession>
<accession>Q8K570</accession>
<accession>Q99JH0</accession>
<accession>Q9WTZ4</accession>
<accession>Q9WTZ5</accession>
<accession>Q9WTZ6</accession>
<dbReference type="EMBL" id="X68362">
    <property type="protein sequence ID" value="CAA48422.1"/>
    <property type="molecule type" value="mRNA"/>
</dbReference>
<dbReference type="EMBL" id="X68363">
    <property type="protein sequence ID" value="CAA48423.1"/>
    <property type="molecule type" value="mRNA"/>
</dbReference>
<dbReference type="EMBL" id="X68364">
    <property type="protein sequence ID" value="CAA48424.1"/>
    <property type="molecule type" value="mRNA"/>
</dbReference>
<dbReference type="EMBL" id="X56230">
    <property type="protein sequence ID" value="CAA39679.1"/>
    <property type="molecule type" value="mRNA"/>
</dbReference>
<dbReference type="EMBL" id="AJ296212">
    <property type="protein sequence ID" value="CAC34943.1"/>
    <property type="molecule type" value="mRNA"/>
</dbReference>
<dbReference type="EMBL" id="AF508939">
    <property type="protein sequence ID" value="AAM34281.1"/>
    <property type="molecule type" value="mRNA"/>
</dbReference>
<dbReference type="EMBL" id="AY177625">
    <property type="protein sequence ID" value="AAO45298.1"/>
    <property type="molecule type" value="mRNA"/>
</dbReference>
<dbReference type="EMBL" id="AJ489474">
    <property type="protein sequence ID" value="CAD35743.1"/>
    <property type="molecule type" value="mRNA"/>
</dbReference>
<dbReference type="EMBL" id="AK028237">
    <property type="protein sequence ID" value="BAC25832.1"/>
    <property type="molecule type" value="mRNA"/>
</dbReference>
<dbReference type="EMBL" id="S65461">
    <property type="protein sequence ID" value="AAB28234.1"/>
    <property type="molecule type" value="mRNA"/>
</dbReference>
<dbReference type="EMBL" id="X70324">
    <property type="protein sequence ID" value="CAA49791.1"/>
    <property type="molecule type" value="mRNA"/>
</dbReference>
<dbReference type="EMBL" id="X70325">
    <property type="protein sequence ID" value="CAA49792.1"/>
    <property type="molecule type" value="mRNA"/>
</dbReference>
<dbReference type="EMBL" id="X51958">
    <property type="protein sequence ID" value="CAA36217.1"/>
    <property type="molecule type" value="mRNA"/>
</dbReference>
<dbReference type="EMBL" id="AF095458">
    <property type="protein sequence ID" value="AAD25325.1"/>
    <property type="molecule type" value="mRNA"/>
</dbReference>
<dbReference type="EMBL" id="AF095459">
    <property type="protein sequence ID" value="AAD25326.1"/>
    <property type="molecule type" value="mRNA"/>
</dbReference>
<dbReference type="EMBL" id="AF095460">
    <property type="protein sequence ID" value="AAD25327.1"/>
    <property type="molecule type" value="mRNA"/>
</dbReference>
<dbReference type="CCDS" id="CCDS15444.1">
    <molecule id="P25425-5"/>
</dbReference>
<dbReference type="PIR" id="I56187">
    <property type="entry name" value="I56187"/>
</dbReference>
<dbReference type="PIR" id="S30293">
    <property type="entry name" value="S30293"/>
</dbReference>
<dbReference type="RefSeq" id="NP_001355737.1">
    <molecule id="P25425-1"/>
    <property type="nucleotide sequence ID" value="NM_001368808.1"/>
</dbReference>
<dbReference type="RefSeq" id="NP_035267.2">
    <property type="nucleotide sequence ID" value="NM_011137.3"/>
</dbReference>
<dbReference type="RefSeq" id="NP_945151.2">
    <molecule id="P25425-5"/>
    <property type="nucleotide sequence ID" value="NM_198933.3"/>
</dbReference>
<dbReference type="RefSeq" id="XP_006496767.1">
    <molecule id="P25425-1"/>
    <property type="nucleotide sequence ID" value="XM_006496704.4"/>
</dbReference>
<dbReference type="RefSeq" id="XP_011237069.1">
    <property type="nucleotide sequence ID" value="XM_011238767.2"/>
</dbReference>
<dbReference type="RefSeq" id="XP_011237071.1">
    <property type="nucleotide sequence ID" value="XM_011238769.2"/>
</dbReference>
<dbReference type="RefSeq" id="XP_017174849.1">
    <molecule id="P25425-2"/>
    <property type="nucleotide sequence ID" value="XM_017319360.3"/>
</dbReference>
<dbReference type="RefSeq" id="XP_030108146.1">
    <molecule id="P25425-1"/>
    <property type="nucleotide sequence ID" value="XM_030252286.1"/>
</dbReference>
<dbReference type="RefSeq" id="XP_030108147.1">
    <molecule id="P25425-2"/>
    <property type="nucleotide sequence ID" value="XM_030252287.2"/>
</dbReference>
<dbReference type="RefSeq" id="XP_036018678.1">
    <molecule id="P25425-1"/>
    <property type="nucleotide sequence ID" value="XM_036162785.1"/>
</dbReference>
<dbReference type="SMR" id="P25425"/>
<dbReference type="BioGRID" id="202301">
    <property type="interactions" value="16"/>
</dbReference>
<dbReference type="CORUM" id="P25425"/>
<dbReference type="FunCoup" id="P25425">
    <property type="interactions" value="2995"/>
</dbReference>
<dbReference type="IntAct" id="P25425">
    <property type="interactions" value="7"/>
</dbReference>
<dbReference type="STRING" id="10090.ENSMUSP00000124738"/>
<dbReference type="GlyGen" id="P25425">
    <property type="glycosylation" value="2 sites, 1 O-linked glycan (2 sites)"/>
</dbReference>
<dbReference type="iPTMnet" id="P25425"/>
<dbReference type="PhosphoSitePlus" id="P25425"/>
<dbReference type="jPOST" id="P25425"/>
<dbReference type="PaxDb" id="10090-ENSMUSP00000107056"/>
<dbReference type="PeptideAtlas" id="P25425"/>
<dbReference type="ProteomicsDB" id="289847">
    <molecule id="P25425-1"/>
</dbReference>
<dbReference type="ProteomicsDB" id="289848">
    <molecule id="P25425-2"/>
</dbReference>
<dbReference type="ProteomicsDB" id="289849">
    <molecule id="P25425-3"/>
</dbReference>
<dbReference type="ProteomicsDB" id="289850">
    <molecule id="P25425-4"/>
</dbReference>
<dbReference type="ProteomicsDB" id="289851">
    <molecule id="P25425-5"/>
</dbReference>
<dbReference type="ProteomicsDB" id="289852">
    <molecule id="P25425-6"/>
</dbReference>
<dbReference type="ProteomicsDB" id="289853">
    <molecule id="P25425-7"/>
</dbReference>
<dbReference type="ProteomicsDB" id="289854">
    <molecule id="P25425-8"/>
</dbReference>
<dbReference type="ProteomicsDB" id="289855">
    <molecule id="P25425-9"/>
</dbReference>
<dbReference type="ProteomicsDB" id="289856">
    <molecule id="P25425-10"/>
</dbReference>
<dbReference type="ProteomicsDB" id="289857">
    <molecule id="P25425-11"/>
</dbReference>
<dbReference type="ProteomicsDB" id="289858">
    <molecule id="P25425-12"/>
</dbReference>
<dbReference type="Pumba" id="P25425"/>
<dbReference type="Antibodypedia" id="3616">
    <property type="antibodies" value="649 antibodies from 45 providers"/>
</dbReference>
<dbReference type="DNASU" id="18986"/>
<dbReference type="Ensembl" id="ENSMUST00000069609.12">
    <molecule id="P25425-5"/>
    <property type="protein sequence ID" value="ENSMUSP00000064000.6"/>
    <property type="gene ID" value="ENSMUSG00000026565.19"/>
</dbReference>
<dbReference type="Ensembl" id="ENSMUST00000111429.11">
    <molecule id="P25425-2"/>
    <property type="protein sequence ID" value="ENSMUSP00000107057.5"/>
    <property type="gene ID" value="ENSMUSG00000026565.19"/>
</dbReference>
<dbReference type="Ensembl" id="ENSMUST00000184643.8">
    <molecule id="P25425-3"/>
    <property type="protein sequence ID" value="ENSMUSP00000138962.3"/>
    <property type="gene ID" value="ENSMUSG00000026565.19"/>
</dbReference>
<dbReference type="GeneID" id="18986"/>
<dbReference type="KEGG" id="mmu:18986"/>
<dbReference type="UCSC" id="uc007djv.1">
    <molecule id="P25425-6"/>
    <property type="organism name" value="mouse"/>
</dbReference>
<dbReference type="UCSC" id="uc007djx.2">
    <molecule id="P25425-5"/>
    <property type="organism name" value="mouse"/>
</dbReference>
<dbReference type="UCSC" id="uc007dkb.2">
    <molecule id="P25425-4"/>
    <property type="organism name" value="mouse"/>
</dbReference>
<dbReference type="UCSC" id="uc007dkc.2">
    <molecule id="P25425-11"/>
    <property type="organism name" value="mouse"/>
</dbReference>
<dbReference type="UCSC" id="uc007dke.1">
    <molecule id="P25425-10"/>
    <property type="organism name" value="mouse"/>
</dbReference>
<dbReference type="AGR" id="MGI:101898"/>
<dbReference type="CTD" id="5451"/>
<dbReference type="MGI" id="MGI:101898">
    <property type="gene designation" value="Pou2f1"/>
</dbReference>
<dbReference type="VEuPathDB" id="HostDB:ENSMUSG00000026565"/>
<dbReference type="eggNOG" id="KOG3802">
    <property type="taxonomic scope" value="Eukaryota"/>
</dbReference>
<dbReference type="GeneTree" id="ENSGT00940000157831"/>
<dbReference type="HOGENOM" id="CLU_013065_4_0_1"/>
<dbReference type="InParanoid" id="P25425"/>
<dbReference type="OrthoDB" id="6358449at2759"/>
<dbReference type="PhylomeDB" id="P25425"/>
<dbReference type="TreeFam" id="TF316413"/>
<dbReference type="Reactome" id="R-MMU-6807505">
    <property type="pathway name" value="RNA polymerase II transcribes snRNA genes"/>
</dbReference>
<dbReference type="Reactome" id="R-MMU-76071">
    <property type="pathway name" value="RNA Polymerase III Transcription Initiation From Type 3 Promoter"/>
</dbReference>
<dbReference type="BioGRID-ORCS" id="18986">
    <property type="hits" value="6 hits in 82 CRISPR screens"/>
</dbReference>
<dbReference type="ChiTaRS" id="Pou2f1">
    <property type="organism name" value="mouse"/>
</dbReference>
<dbReference type="PRO" id="PR:P25425"/>
<dbReference type="Proteomes" id="UP000000589">
    <property type="component" value="Chromosome 1"/>
</dbReference>
<dbReference type="RNAct" id="P25425">
    <property type="molecule type" value="protein"/>
</dbReference>
<dbReference type="Bgee" id="ENSMUSG00000026565">
    <property type="expression patterns" value="Expressed in rostral migratory stream and 257 other cell types or tissues"/>
</dbReference>
<dbReference type="ExpressionAtlas" id="P25425">
    <property type="expression patterns" value="baseline and differential"/>
</dbReference>
<dbReference type="GO" id="GO:0005634">
    <property type="term" value="C:nucleus"/>
    <property type="evidence" value="ECO:0000314"/>
    <property type="project" value="MGI"/>
</dbReference>
<dbReference type="GO" id="GO:0005667">
    <property type="term" value="C:transcription regulator complex"/>
    <property type="evidence" value="ECO:0000314"/>
    <property type="project" value="MGI"/>
</dbReference>
<dbReference type="GO" id="GO:0003682">
    <property type="term" value="F:chromatin binding"/>
    <property type="evidence" value="ECO:0000314"/>
    <property type="project" value="MGI"/>
</dbReference>
<dbReference type="GO" id="GO:0003677">
    <property type="term" value="F:DNA binding"/>
    <property type="evidence" value="ECO:0000314"/>
    <property type="project" value="MGI"/>
</dbReference>
<dbReference type="GO" id="GO:0000981">
    <property type="term" value="F:DNA-binding transcription factor activity, RNA polymerase II-specific"/>
    <property type="evidence" value="ECO:0007669"/>
    <property type="project" value="InterPro"/>
</dbReference>
<dbReference type="GO" id="GO:0043565">
    <property type="term" value="F:sequence-specific DNA binding"/>
    <property type="evidence" value="ECO:0000314"/>
    <property type="project" value="MGI"/>
</dbReference>
<dbReference type="GO" id="GO:0060235">
    <property type="term" value="P:lens induction in camera-type eye"/>
    <property type="evidence" value="ECO:0000316"/>
    <property type="project" value="MGI"/>
</dbReference>
<dbReference type="GO" id="GO:0045892">
    <property type="term" value="P:negative regulation of DNA-templated transcription"/>
    <property type="evidence" value="ECO:0000266"/>
    <property type="project" value="MGI"/>
</dbReference>
<dbReference type="GO" id="GO:0030910">
    <property type="term" value="P:olfactory placode formation"/>
    <property type="evidence" value="ECO:0000316"/>
    <property type="project" value="MGI"/>
</dbReference>
<dbReference type="GO" id="GO:0045944">
    <property type="term" value="P:positive regulation of transcription by RNA polymerase II"/>
    <property type="evidence" value="ECO:0000314"/>
    <property type="project" value="MGI"/>
</dbReference>
<dbReference type="GO" id="GO:0006366">
    <property type="term" value="P:transcription by RNA polymerase II"/>
    <property type="evidence" value="ECO:0000314"/>
    <property type="project" value="MGI"/>
</dbReference>
<dbReference type="CDD" id="cd00086">
    <property type="entry name" value="homeodomain"/>
    <property type="match status" value="1"/>
</dbReference>
<dbReference type="FunFam" id="1.10.10.60:FF:000005">
    <property type="entry name" value="POU domain protein"/>
    <property type="match status" value="1"/>
</dbReference>
<dbReference type="FunFam" id="1.10.260.40:FF:000001">
    <property type="entry name" value="POU domain protein"/>
    <property type="match status" value="1"/>
</dbReference>
<dbReference type="Gene3D" id="1.10.10.60">
    <property type="entry name" value="Homeodomain-like"/>
    <property type="match status" value="1"/>
</dbReference>
<dbReference type="Gene3D" id="1.10.260.40">
    <property type="entry name" value="lambda repressor-like DNA-binding domains"/>
    <property type="match status" value="1"/>
</dbReference>
<dbReference type="InterPro" id="IPR001356">
    <property type="entry name" value="HD"/>
</dbReference>
<dbReference type="InterPro" id="IPR017970">
    <property type="entry name" value="Homeobox_CS"/>
</dbReference>
<dbReference type="InterPro" id="IPR009057">
    <property type="entry name" value="Homeodomain-like_sf"/>
</dbReference>
<dbReference type="InterPro" id="IPR010982">
    <property type="entry name" value="Lambda_DNA-bd_dom_sf"/>
</dbReference>
<dbReference type="InterPro" id="IPR013847">
    <property type="entry name" value="POU"/>
</dbReference>
<dbReference type="InterPro" id="IPR045703">
    <property type="entry name" value="POU2F1_C"/>
</dbReference>
<dbReference type="InterPro" id="IPR000327">
    <property type="entry name" value="POU_dom"/>
</dbReference>
<dbReference type="InterPro" id="IPR050255">
    <property type="entry name" value="POU_domain_TF"/>
</dbReference>
<dbReference type="InterPro" id="IPR000972">
    <property type="entry name" value="TF_octamer"/>
</dbReference>
<dbReference type="PANTHER" id="PTHR11636">
    <property type="entry name" value="POU DOMAIN"/>
    <property type="match status" value="1"/>
</dbReference>
<dbReference type="PANTHER" id="PTHR11636:SF47">
    <property type="entry name" value="POU DOMAIN, CLASS 2, TRANSCRIPTION FACTOR 1"/>
    <property type="match status" value="1"/>
</dbReference>
<dbReference type="Pfam" id="PF00046">
    <property type="entry name" value="Homeodomain"/>
    <property type="match status" value="1"/>
</dbReference>
<dbReference type="Pfam" id="PF00157">
    <property type="entry name" value="Pou"/>
    <property type="match status" value="1"/>
</dbReference>
<dbReference type="Pfam" id="PF19536">
    <property type="entry name" value="POU2F1_C"/>
    <property type="match status" value="2"/>
</dbReference>
<dbReference type="PRINTS" id="PR00029">
    <property type="entry name" value="OCTAMER"/>
</dbReference>
<dbReference type="PRINTS" id="PR00028">
    <property type="entry name" value="POUDOMAIN"/>
</dbReference>
<dbReference type="SMART" id="SM00389">
    <property type="entry name" value="HOX"/>
    <property type="match status" value="1"/>
</dbReference>
<dbReference type="SMART" id="SM00352">
    <property type="entry name" value="POU"/>
    <property type="match status" value="1"/>
</dbReference>
<dbReference type="SUPFAM" id="SSF46689">
    <property type="entry name" value="Homeodomain-like"/>
    <property type="match status" value="1"/>
</dbReference>
<dbReference type="SUPFAM" id="SSF47413">
    <property type="entry name" value="lambda repressor-like DNA-binding domains"/>
    <property type="match status" value="1"/>
</dbReference>
<dbReference type="PROSITE" id="PS00027">
    <property type="entry name" value="HOMEOBOX_1"/>
    <property type="match status" value="1"/>
</dbReference>
<dbReference type="PROSITE" id="PS50071">
    <property type="entry name" value="HOMEOBOX_2"/>
    <property type="match status" value="1"/>
</dbReference>
<dbReference type="PROSITE" id="PS00035">
    <property type="entry name" value="POU_1"/>
    <property type="match status" value="1"/>
</dbReference>
<dbReference type="PROSITE" id="PS00465">
    <property type="entry name" value="POU_2"/>
    <property type="match status" value="1"/>
</dbReference>
<dbReference type="PROSITE" id="PS51179">
    <property type="entry name" value="POU_3"/>
    <property type="match status" value="1"/>
</dbReference>
<keyword id="KW-0010">Activator</keyword>
<keyword id="KW-0025">Alternative splicing</keyword>
<keyword id="KW-0238">DNA-binding</keyword>
<keyword id="KW-0371">Homeobox</keyword>
<keyword id="KW-0539">Nucleus</keyword>
<keyword id="KW-0597">Phosphoprotein</keyword>
<keyword id="KW-1185">Reference proteome</keyword>
<keyword id="KW-0804">Transcription</keyword>
<keyword id="KW-0805">Transcription regulation</keyword>
<proteinExistence type="evidence at protein level"/>
<gene>
    <name type="primary">Pou2f1</name>
    <name type="synonym">Oct-1</name>
    <name type="synonym">Otf-1</name>
    <name type="synonym">Otf1</name>
</gene>
<organism>
    <name type="scientific">Mus musculus</name>
    <name type="common">Mouse</name>
    <dbReference type="NCBI Taxonomy" id="10090"/>
    <lineage>
        <taxon>Eukaryota</taxon>
        <taxon>Metazoa</taxon>
        <taxon>Chordata</taxon>
        <taxon>Craniata</taxon>
        <taxon>Vertebrata</taxon>
        <taxon>Euteleostomi</taxon>
        <taxon>Mammalia</taxon>
        <taxon>Eutheria</taxon>
        <taxon>Euarchontoglires</taxon>
        <taxon>Glires</taxon>
        <taxon>Rodentia</taxon>
        <taxon>Myomorpha</taxon>
        <taxon>Muroidea</taxon>
        <taxon>Muridae</taxon>
        <taxon>Murinae</taxon>
        <taxon>Mus</taxon>
        <taxon>Mus</taxon>
    </lineage>
</organism>
<feature type="chain" id="PRO_0000100708" description="POU domain, class 2, transcription factor 1">
    <location>
        <begin position="1"/>
        <end position="770"/>
    </location>
</feature>
<feature type="domain" description="POU-specific" evidence="4">
    <location>
        <begin position="281"/>
        <end position="355"/>
    </location>
</feature>
<feature type="DNA-binding region" description="Homeobox" evidence="3">
    <location>
        <begin position="382"/>
        <end position="441"/>
    </location>
</feature>
<feature type="region of interest" description="Disordered" evidence="5">
    <location>
        <begin position="1"/>
        <end position="33"/>
    </location>
</feature>
<feature type="region of interest" description="Disordered" evidence="5">
    <location>
        <begin position="68"/>
        <end position="97"/>
    </location>
</feature>
<feature type="region of interest" description="Disordered" evidence="5">
    <location>
        <begin position="262"/>
        <end position="285"/>
    </location>
</feature>
<feature type="region of interest" description="Disordered" evidence="5">
    <location>
        <begin position="357"/>
        <end position="385"/>
    </location>
</feature>
<feature type="region of interest" description="Disordered" evidence="5">
    <location>
        <begin position="519"/>
        <end position="589"/>
    </location>
</feature>
<feature type="compositionally biased region" description="Polar residues" evidence="5">
    <location>
        <begin position="1"/>
        <end position="26"/>
    </location>
</feature>
<feature type="compositionally biased region" description="Low complexity" evidence="5">
    <location>
        <begin position="80"/>
        <end position="97"/>
    </location>
</feature>
<feature type="compositionally biased region" description="Polar residues" evidence="5">
    <location>
        <begin position="262"/>
        <end position="272"/>
    </location>
</feature>
<feature type="compositionally biased region" description="Low complexity" evidence="5">
    <location>
        <begin position="357"/>
        <end position="372"/>
    </location>
</feature>
<feature type="compositionally biased region" description="Low complexity" evidence="5">
    <location>
        <begin position="519"/>
        <end position="580"/>
    </location>
</feature>
<feature type="modified residue" description="Phosphothreonine" evidence="2">
    <location>
        <position position="271"/>
    </location>
</feature>
<feature type="modified residue" description="Phosphothreonine" evidence="2">
    <location>
        <position position="277"/>
    </location>
</feature>
<feature type="modified residue" description="Phosphoserine" evidence="2">
    <location>
        <position position="284"/>
    </location>
</feature>
<feature type="modified residue" description="Phosphoserine" evidence="2">
    <location>
        <position position="388"/>
    </location>
</feature>
<feature type="modified residue" description="Phosphoserine" evidence="2">
    <location>
        <position position="451"/>
    </location>
</feature>
<feature type="splice variant" id="VSP_013403" description="In isoform 12." evidence="15">
    <original>M</original>
    <variation>MADGGAASQDESSAAAAAAADSR</variation>
    <location>
        <position position="1"/>
    </location>
</feature>
<feature type="splice variant" id="VSP_007271" description="In isoform 4, isoform 5 and isoform 11." evidence="11 14 18">
    <original>M</original>
    <variation>MLDCSDCVLDSRM</variation>
    <location>
        <position position="1"/>
    </location>
</feature>
<feature type="splice variant" id="VSP_007272" description="In isoform 4." evidence="14">
    <location>
        <begin position="54"/>
        <end position="71"/>
    </location>
</feature>
<feature type="splice variant" id="VSP_013404" description="In isoform 10." evidence="13">
    <original>DQDLRRGCSWEVLRSLPDRVTTTA</original>
    <variation>GKQQPAYRLVSTVPVRFLWRTARS</variation>
    <location>
        <begin position="499"/>
        <end position="522"/>
    </location>
</feature>
<feature type="splice variant" id="VSP_002321" description="In isoform 2, isoform 3, isoform 4 and isoform 5." evidence="11 12 14 16 17">
    <location>
        <begin position="499"/>
        <end position="522"/>
    </location>
</feature>
<feature type="splice variant" id="VSP_013405" description="In isoform 10." evidence="13">
    <location>
        <begin position="523"/>
        <end position="770"/>
    </location>
</feature>
<feature type="splice variant" id="VSP_007273" description="In isoform 4 and isoform 11." evidence="14 18">
    <location>
        <begin position="639"/>
        <end position="770"/>
    </location>
</feature>
<feature type="splice variant" id="VSP_007274" description="In isoform 9." evidence="10">
    <original>GALLSLSPG</original>
    <variation>IASWIGELS</variation>
    <location>
        <begin position="639"/>
        <end position="647"/>
    </location>
</feature>
<feature type="splice variant" id="VSP_007276" description="In isoform 7." evidence="10">
    <original>GAL</original>
    <variation>SCF</variation>
    <location>
        <begin position="639"/>
        <end position="641"/>
    </location>
</feature>
<feature type="splice variant" id="VSP_007277" description="In isoform 7." evidence="10">
    <location>
        <begin position="642"/>
        <end position="770"/>
    </location>
</feature>
<feature type="splice variant" id="VSP_007275" description="In isoform 9." evidence="10">
    <location>
        <begin position="648"/>
        <end position="770"/>
    </location>
</feature>
<feature type="splice variant" id="VSP_007278" description="In isoform 6 and isoform 8." evidence="10 16">
    <location>
        <begin position="668"/>
        <end position="691"/>
    </location>
</feature>
<feature type="splice variant" id="VSP_002322" description="In isoform 3 and isoform 8." evidence="10 17">
    <original>VSLVSAAAA</original>
    <variation>DCFMDWRTF</variation>
    <location>
        <begin position="717"/>
        <end position="725"/>
    </location>
</feature>
<feature type="splice variant" id="VSP_002323" description="In isoform 3 and isoform 8." evidence="10 17">
    <location>
        <begin position="726"/>
        <end position="770"/>
    </location>
</feature>
<feature type="sequence conflict" description="In Ref. 2; CAA39679." evidence="19" ref="2">
    <original>Q</original>
    <variation>L</variation>
    <location>
        <position position="43"/>
    </location>
</feature>
<feature type="sequence conflict" description="In Ref. 3; CAC34943." evidence="19" ref="3">
    <original>V</original>
    <variation>I</variation>
    <location>
        <position position="70"/>
    </location>
</feature>
<feature type="sequence conflict" description="In Ref. 9." evidence="19" ref="9">
    <original>A</original>
    <variation>P</variation>
    <location>
        <position position="129"/>
    </location>
</feature>
<feature type="sequence conflict" description="In Ref. 6; CAD35743." evidence="19" ref="6">
    <original>S</original>
    <variation>C</variation>
    <location>
        <position position="168"/>
    </location>
</feature>
<feature type="sequence conflict" description="In Ref. 3; CAC34943." evidence="19" ref="3">
    <original>L</original>
    <variation>H</variation>
    <location>
        <position position="188"/>
    </location>
</feature>
<feature type="sequence conflict" description="In Ref. 3; CAC34943." evidence="19" ref="3">
    <original>Q</original>
    <variation>R</variation>
    <location>
        <position position="234"/>
    </location>
</feature>
<feature type="sequence conflict" description="In Ref. 8." evidence="19" ref="8">
    <original>L</original>
    <variation>W</variation>
    <location>
        <position position="333"/>
    </location>
</feature>
<feature type="sequence conflict" description="In Ref. 3; CAC34943." evidence="19" ref="3">
    <original>D</original>
    <variation>G</variation>
    <location>
        <position position="360"/>
    </location>
</feature>
<feature type="sequence conflict" description="In Ref. 10." evidence="19" ref="10">
    <original>A</original>
    <variation>D</variation>
    <location>
        <position position="368"/>
    </location>
</feature>
<feature type="sequence conflict" description="In Ref. 3; CAC34943." evidence="19" ref="3">
    <original>N</original>
    <variation>D</variation>
    <location>
        <position position="441"/>
    </location>
</feature>
<feature type="sequence conflict" description="In Ref. 3; CAC34943." evidence="19" ref="3">
    <original>S</original>
    <variation>G</variation>
    <location>
        <position position="474"/>
    </location>
</feature>
<feature type="sequence conflict" description="In Ref. 3; CAC34943." evidence="19" ref="3">
    <original>G</original>
    <variation>D</variation>
    <location>
        <position position="596"/>
    </location>
</feature>
<feature type="sequence conflict" description="In Ref. 1; CAA48422/CAA48423/CAA48424." evidence="19" ref="1">
    <original>A</original>
    <variation>G</variation>
    <location>
        <position position="608"/>
    </location>
</feature>
<feature type="sequence conflict" description="In Ref. 3; CAC34943." evidence="19" ref="3">
    <original>Q</original>
    <variation>R</variation>
    <location>
        <position position="609"/>
    </location>
</feature>
<reference key="1">
    <citation type="journal article" date="1993" name="Nucleic Acids Res.">
        <title>Mouse Oct-1 contains a composite homeodomain of human Oct-1 and Oct-2.</title>
        <authorList>
            <person name="Suzuki N."/>
            <person name="Peter W."/>
            <person name="Ciesiolka T."/>
            <person name="Gruss P."/>
            <person name="Schoeler H.R."/>
        </authorList>
    </citation>
    <scope>NUCLEOTIDE SEQUENCE [MRNA] (ISOFORMS 1; 2 AND 3)</scope>
</reference>
<reference key="2">
    <citation type="journal article" date="1992" name="Nucleic Acids Res.">
        <title>The nucleotide sequence of mouse OCT-1 cDNA.</title>
        <authorList>
            <person name="Stepchenko A.G."/>
        </authorList>
    </citation>
    <scope>NUCLEOTIDE SEQUENCE [MRNA] (ISOFORM 4)</scope>
</reference>
<reference key="3">
    <citation type="journal article" date="2001" name="Mol. Genet. Genomics">
        <title>Tissue-specific isoforms of the ubiquitous transcription factor Oct-1.</title>
        <authorList>
            <person name="Pankratova E.V."/>
            <person name="Deyev I.E."/>
            <person name="Zhenilo S.V."/>
            <person name="Polanovsky O.L."/>
        </authorList>
    </citation>
    <scope>NUCLEOTIDE SEQUENCE [MRNA] (ISOFORM 5)</scope>
    <scope>TISSUE SPECIFICITY</scope>
</reference>
<reference key="4">
    <citation type="journal article" date="2002" name="Biochim. Biophys. Acta">
        <title>Involvement of Oct-1 in transcriptional regulation of beta-casein gene expression in mouse mammary gland.</title>
        <authorList>
            <person name="Zhao F.-Q."/>
            <person name="Adachi K."/>
            <person name="Oka T."/>
        </authorList>
    </citation>
    <scope>NUCLEOTIDE SEQUENCE [MRNA] (ISOFORM 2)</scope>
    <source>
        <strain>C3H/HeN</strain>
        <tissue>Mammary gland</tissue>
    </source>
</reference>
<reference key="5">
    <citation type="journal article" date="2004" name="Gene">
        <title>Cloning, genomic organization, expression, and effect on beta-casein promoter activity of a novel isoform of the mouse Oct-1 transcription factor.</title>
        <authorList>
            <person name="Zhao F.-Q."/>
            <person name="Zheng Y."/>
            <person name="Dong B."/>
            <person name="Oka T."/>
        </authorList>
    </citation>
    <scope>NUCLEOTIDE SEQUENCE [MRNA] (ISOFORM 10)</scope>
    <scope>TISSUE SPECIFICITY</scope>
    <source>
        <tissue>Lung</tissue>
    </source>
</reference>
<reference key="6">
    <citation type="submission" date="2003-06" db="EMBL/GenBank/DDBJ databases">
        <title>Novel isoforms of mRNA of gene oct-1.</title>
        <authorList>
            <person name="Deyev I.E."/>
            <person name="Zhenilo S.V."/>
            <person name="Pankratova E.V."/>
            <person name="Polanovsky O.L."/>
        </authorList>
    </citation>
    <scope>NUCLEOTIDE SEQUENCE [MRNA] (ISOFORM 11)</scope>
    <source>
        <strain>BALB/cJ</strain>
        <tissue>Myeloma</tissue>
    </source>
</reference>
<reference key="7">
    <citation type="journal article" date="2005" name="Science">
        <title>The transcriptional landscape of the mammalian genome.</title>
        <authorList>
            <person name="Carninci P."/>
            <person name="Kasukawa T."/>
            <person name="Katayama S."/>
            <person name="Gough J."/>
            <person name="Frith M.C."/>
            <person name="Maeda N."/>
            <person name="Oyama R."/>
            <person name="Ravasi T."/>
            <person name="Lenhard B."/>
            <person name="Wells C."/>
            <person name="Kodzius R."/>
            <person name="Shimokawa K."/>
            <person name="Bajic V.B."/>
            <person name="Brenner S.E."/>
            <person name="Batalov S."/>
            <person name="Forrest A.R."/>
            <person name="Zavolan M."/>
            <person name="Davis M.J."/>
            <person name="Wilming L.G."/>
            <person name="Aidinis V."/>
            <person name="Allen J.E."/>
            <person name="Ambesi-Impiombato A."/>
            <person name="Apweiler R."/>
            <person name="Aturaliya R.N."/>
            <person name="Bailey T.L."/>
            <person name="Bansal M."/>
            <person name="Baxter L."/>
            <person name="Beisel K.W."/>
            <person name="Bersano T."/>
            <person name="Bono H."/>
            <person name="Chalk A.M."/>
            <person name="Chiu K.P."/>
            <person name="Choudhary V."/>
            <person name="Christoffels A."/>
            <person name="Clutterbuck D.R."/>
            <person name="Crowe M.L."/>
            <person name="Dalla E."/>
            <person name="Dalrymple B.P."/>
            <person name="de Bono B."/>
            <person name="Della Gatta G."/>
            <person name="di Bernardo D."/>
            <person name="Down T."/>
            <person name="Engstrom P."/>
            <person name="Fagiolini M."/>
            <person name="Faulkner G."/>
            <person name="Fletcher C.F."/>
            <person name="Fukushima T."/>
            <person name="Furuno M."/>
            <person name="Futaki S."/>
            <person name="Gariboldi M."/>
            <person name="Georgii-Hemming P."/>
            <person name="Gingeras T.R."/>
            <person name="Gojobori T."/>
            <person name="Green R.E."/>
            <person name="Gustincich S."/>
            <person name="Harbers M."/>
            <person name="Hayashi Y."/>
            <person name="Hensch T.K."/>
            <person name="Hirokawa N."/>
            <person name="Hill D."/>
            <person name="Huminiecki L."/>
            <person name="Iacono M."/>
            <person name="Ikeo K."/>
            <person name="Iwama A."/>
            <person name="Ishikawa T."/>
            <person name="Jakt M."/>
            <person name="Kanapin A."/>
            <person name="Katoh M."/>
            <person name="Kawasawa Y."/>
            <person name="Kelso J."/>
            <person name="Kitamura H."/>
            <person name="Kitano H."/>
            <person name="Kollias G."/>
            <person name="Krishnan S.P."/>
            <person name="Kruger A."/>
            <person name="Kummerfeld S.K."/>
            <person name="Kurochkin I.V."/>
            <person name="Lareau L.F."/>
            <person name="Lazarevic D."/>
            <person name="Lipovich L."/>
            <person name="Liu J."/>
            <person name="Liuni S."/>
            <person name="McWilliam S."/>
            <person name="Madan Babu M."/>
            <person name="Madera M."/>
            <person name="Marchionni L."/>
            <person name="Matsuda H."/>
            <person name="Matsuzawa S."/>
            <person name="Miki H."/>
            <person name="Mignone F."/>
            <person name="Miyake S."/>
            <person name="Morris K."/>
            <person name="Mottagui-Tabar S."/>
            <person name="Mulder N."/>
            <person name="Nakano N."/>
            <person name="Nakauchi H."/>
            <person name="Ng P."/>
            <person name="Nilsson R."/>
            <person name="Nishiguchi S."/>
            <person name="Nishikawa S."/>
            <person name="Nori F."/>
            <person name="Ohara O."/>
            <person name="Okazaki Y."/>
            <person name="Orlando V."/>
            <person name="Pang K.C."/>
            <person name="Pavan W.J."/>
            <person name="Pavesi G."/>
            <person name="Pesole G."/>
            <person name="Petrovsky N."/>
            <person name="Piazza S."/>
            <person name="Reed J."/>
            <person name="Reid J.F."/>
            <person name="Ring B.Z."/>
            <person name="Ringwald M."/>
            <person name="Rost B."/>
            <person name="Ruan Y."/>
            <person name="Salzberg S.L."/>
            <person name="Sandelin A."/>
            <person name="Schneider C."/>
            <person name="Schoenbach C."/>
            <person name="Sekiguchi K."/>
            <person name="Semple C.A."/>
            <person name="Seno S."/>
            <person name="Sessa L."/>
            <person name="Sheng Y."/>
            <person name="Shibata Y."/>
            <person name="Shimada H."/>
            <person name="Shimada K."/>
            <person name="Silva D."/>
            <person name="Sinclair B."/>
            <person name="Sperling S."/>
            <person name="Stupka E."/>
            <person name="Sugiura K."/>
            <person name="Sultana R."/>
            <person name="Takenaka Y."/>
            <person name="Taki K."/>
            <person name="Tammoja K."/>
            <person name="Tan S.L."/>
            <person name="Tang S."/>
            <person name="Taylor M.S."/>
            <person name="Tegner J."/>
            <person name="Teichmann S.A."/>
            <person name="Ueda H.R."/>
            <person name="van Nimwegen E."/>
            <person name="Verardo R."/>
            <person name="Wei C.L."/>
            <person name="Yagi K."/>
            <person name="Yamanishi H."/>
            <person name="Zabarovsky E."/>
            <person name="Zhu S."/>
            <person name="Zimmer A."/>
            <person name="Hide W."/>
            <person name="Bult C."/>
            <person name="Grimmond S.M."/>
            <person name="Teasdale R.D."/>
            <person name="Liu E.T."/>
            <person name="Brusic V."/>
            <person name="Quackenbush J."/>
            <person name="Wahlestedt C."/>
            <person name="Mattick J.S."/>
            <person name="Hume D.A."/>
            <person name="Kai C."/>
            <person name="Sasaki D."/>
            <person name="Tomaru Y."/>
            <person name="Fukuda S."/>
            <person name="Kanamori-Katayama M."/>
            <person name="Suzuki M."/>
            <person name="Aoki J."/>
            <person name="Arakawa T."/>
            <person name="Iida J."/>
            <person name="Imamura K."/>
            <person name="Itoh M."/>
            <person name="Kato T."/>
            <person name="Kawaji H."/>
            <person name="Kawagashira N."/>
            <person name="Kawashima T."/>
            <person name="Kojima M."/>
            <person name="Kondo S."/>
            <person name="Konno H."/>
            <person name="Nakano K."/>
            <person name="Ninomiya N."/>
            <person name="Nishio T."/>
            <person name="Okada M."/>
            <person name="Plessy C."/>
            <person name="Shibata K."/>
            <person name="Shiraki T."/>
            <person name="Suzuki S."/>
            <person name="Tagami M."/>
            <person name="Waki K."/>
            <person name="Watahiki A."/>
            <person name="Okamura-Oho Y."/>
            <person name="Suzuki H."/>
            <person name="Kawai J."/>
            <person name="Hayashizaki Y."/>
        </authorList>
    </citation>
    <scope>NUCLEOTIDE SEQUENCE [LARGE SCALE MRNA] (ISOFORM 12)</scope>
    <source>
        <strain>C57BL/6J</strain>
        <tissue>Embryo</tissue>
    </source>
</reference>
<reference key="8">
    <citation type="journal article" date="1993" name="J. Immunol.">
        <title>CD3 zeta/eta/theta locus is colinear with and transcribed antisense to the gene encoding the transcription factor Oct-1.</title>
        <authorList>
            <person name="Lerner A."/>
            <person name="D'Adamio L."/>
            <person name="Diener A.C."/>
            <person name="Clayton L.K."/>
            <person name="Reinherz E.L."/>
        </authorList>
    </citation>
    <scope>NUCLEOTIDE SEQUENCE [MRNA] OF 8-770</scope>
</reference>
<reference key="9">
    <citation type="journal article" date="1995" name="Biochim. Biophys. Acta">
        <title>Cloning, sequencing and expression of two isoforms of the murine oct-1 transcription factor.</title>
        <authorList>
            <person name="Jaffe J."/>
            <person name="Hochberg M."/>
            <person name="Riss J."/>
            <person name="Hasin T."/>
            <person name="Reich L."/>
            <person name="Laskov R."/>
        </authorList>
    </citation>
    <scope>NUCLEOTIDE SEQUENCE [MRNA] OF 30-770 (ISOFORMS 2 AND 6)</scope>
    <scope>TISSUE SPECIFICITY</scope>
    <source>
        <strain>C57BL/6 X DBA/20</strain>
        <tissue>Lymphoid tissue</tissue>
    </source>
</reference>
<reference key="10">
    <citation type="journal article" date="1990" name="Nucleic Acids Res.">
        <title>Cloning and sequencing of POU-boxes expressed in mouse testis.</title>
        <authorList>
            <person name="Goldsborough A."/>
            <person name="Ashworth A."/>
            <person name="Willison K.R."/>
        </authorList>
    </citation>
    <scope>NUCLEOTIDE SEQUENCE [MRNA] OF 305-426</scope>
    <source>
        <tissue>Testis</tissue>
    </source>
</reference>
<reference key="11">
    <citation type="journal article" date="1999" name="Biochim. Biophys. Acta">
        <title>Expression of novel alternatively spliced isoforms of the oct-1 transcription factor.</title>
        <authorList>
            <person name="Riss J."/>
            <person name="Laskov R."/>
        </authorList>
    </citation>
    <scope>NUCLEOTIDE SEQUENCE [MRNA] OF 669-770 (ISOFORMS 7; 8 AND 9)</scope>
    <scope>TISSUE SPECIFICITY</scope>
    <source>
        <strain>BALB/cJ</strain>
        <tissue>Testis</tissue>
    </source>
</reference>
<reference key="12">
    <citation type="journal article" date="2010" name="Cell">
        <title>A tissue-specific atlas of mouse protein phosphorylation and expression.</title>
        <authorList>
            <person name="Huttlin E.L."/>
            <person name="Jedrychowski M.P."/>
            <person name="Elias J.E."/>
            <person name="Goswami T."/>
            <person name="Rad R."/>
            <person name="Beausoleil S.A."/>
            <person name="Villen J."/>
            <person name="Haas W."/>
            <person name="Sowa M.E."/>
            <person name="Gygi S.P."/>
        </authorList>
    </citation>
    <scope>IDENTIFICATION BY MASS SPECTROMETRY [LARGE SCALE ANALYSIS]</scope>
    <source>
        <tissue>Brown adipose tissue</tissue>
        <tissue>Kidney</tissue>
        <tissue>Spleen</tissue>
    </source>
</reference>
<protein>
    <recommendedName>
        <fullName>POU domain, class 2, transcription factor 1</fullName>
    </recommendedName>
    <alternativeName>
        <fullName>NF-A1</fullName>
    </alternativeName>
    <alternativeName>
        <fullName>Octamer-binding protein 1</fullName>
        <shortName>Oct-1</shortName>
    </alternativeName>
    <alternativeName>
        <fullName>Octamer-binding transcription factor 1</fullName>
        <shortName>OTF-1</shortName>
    </alternativeName>
</protein>
<evidence type="ECO:0000250" key="1"/>
<evidence type="ECO:0000250" key="2">
    <source>
        <dbReference type="UniProtKB" id="P14859"/>
    </source>
</evidence>
<evidence type="ECO:0000255" key="3">
    <source>
        <dbReference type="PROSITE-ProRule" id="PRU00108"/>
    </source>
</evidence>
<evidence type="ECO:0000255" key="4">
    <source>
        <dbReference type="PROSITE-ProRule" id="PRU00530"/>
    </source>
</evidence>
<evidence type="ECO:0000256" key="5">
    <source>
        <dbReference type="SAM" id="MobiDB-lite"/>
    </source>
</evidence>
<evidence type="ECO:0000269" key="6">
    <source>
    </source>
</evidence>
<evidence type="ECO:0000269" key="7">
    <source>
    </source>
</evidence>
<evidence type="ECO:0000269" key="8">
    <source>
    </source>
</evidence>
<evidence type="ECO:0000269" key="9">
    <source>
    </source>
</evidence>
<evidence type="ECO:0000303" key="10">
    <source>
    </source>
</evidence>
<evidence type="ECO:0000303" key="11">
    <source>
    </source>
</evidence>
<evidence type="ECO:0000303" key="12">
    <source>
    </source>
</evidence>
<evidence type="ECO:0000303" key="13">
    <source>
    </source>
</evidence>
<evidence type="ECO:0000303" key="14">
    <source>
    </source>
</evidence>
<evidence type="ECO:0000303" key="15">
    <source>
    </source>
</evidence>
<evidence type="ECO:0000303" key="16">
    <source>
    </source>
</evidence>
<evidence type="ECO:0000303" key="17">
    <source>
    </source>
</evidence>
<evidence type="ECO:0000303" key="18">
    <source ref="6"/>
</evidence>
<evidence type="ECO:0000305" key="19"/>